<keyword id="KW-1015">Disulfide bond</keyword>
<keyword id="KW-0325">Glycoprotein</keyword>
<keyword id="KW-0358">Heparin-binding</keyword>
<keyword id="KW-0393">Immunoglobulin domain</keyword>
<keyword id="KW-0472">Membrane</keyword>
<keyword id="KW-0654">Proteoglycan</keyword>
<keyword id="KW-1185">Reference proteome</keyword>
<keyword id="KW-0677">Repeat</keyword>
<keyword id="KW-0732">Signal</keyword>
<keyword id="KW-0812">Transmembrane</keyword>
<keyword id="KW-1133">Transmembrane helix</keyword>
<comment type="function">
    <text evidence="1">Mediates response to the active Hedgehog (Hh) protein signal in embryos, functioning upstream or at the level of patched (ptc).</text>
</comment>
<comment type="subunit">
    <text evidence="1">Homodimer. Heterotetramer; 2 iHog chains bind 2 hh chains when facilitated by heparin, heparin is required to promote high-affinity interactions between hh and iHog (By similarity).</text>
</comment>
<comment type="subcellular location">
    <subcellularLocation>
        <location evidence="2">Membrane</location>
        <topology evidence="1 2">Single-pass type I membrane protein</topology>
    </subcellularLocation>
</comment>
<comment type="domain">
    <text evidence="1">The first fibronectin type-III domain mediates a specific interaction with Hh protein, in vitro. The second fibronectin type-III domain is additionally required for in vivo signaling activity (By similarity).</text>
</comment>
<comment type="similarity">
    <text evidence="2 6">Belongs to the immunoglobulin superfamily. IHOG family.</text>
</comment>
<protein>
    <recommendedName>
        <fullName evidence="1">Interference hedgehog</fullName>
    </recommendedName>
</protein>
<evidence type="ECO:0000250" key="1">
    <source>
        <dbReference type="UniProtKB" id="Q9VM64"/>
    </source>
</evidence>
<evidence type="ECO:0000255" key="2"/>
<evidence type="ECO:0000255" key="3">
    <source>
        <dbReference type="PROSITE-ProRule" id="PRU00114"/>
    </source>
</evidence>
<evidence type="ECO:0000255" key="4">
    <source>
        <dbReference type="PROSITE-ProRule" id="PRU00316"/>
    </source>
</evidence>
<evidence type="ECO:0000256" key="5">
    <source>
        <dbReference type="SAM" id="MobiDB-lite"/>
    </source>
</evidence>
<evidence type="ECO:0000305" key="6"/>
<evidence type="ECO:0000312" key="7">
    <source>
        <dbReference type="EMBL" id="EDW64639.1"/>
    </source>
</evidence>
<proteinExistence type="inferred from homology"/>
<name>IHOG_DROVI</name>
<sequence>MSLTRRFSLTLLLLLPLLTSLLAAIPVLQANLSPAPSSSPGPGVRILRAPESTVAPPGDEVVFVCETSLPPEYFEWSYASSRSHPPRFKYLKSSSAKANHNITITHNNDISKLRVIVRPETLGEYRCVAWFGPLAVTSTTARLEMASISGDGADTDQRAHWRVAAGNTVLWHCGQVASNPAPSWSFYYNDNEMPPASTLSDSNGTLLLPHVSAASSGSYSCVATNTASGVRLALPSRLELQVPAAALASTAPALLNGQRVRTQVFAKAGETVLLLCPGVGYPPPTAVWSSPNVPGAVYNNRTRVLPYGLQISALQPLDAGTYICYLDNGIRPALEHFIELVVQKSPRILRPPTANLTNEGERMQLECEATGMPKPEIYWLLNGESSVYDVEAEQVPNGHLILHSVQKRHAGYVQCFARNSLGEHSAGTLLQVNPKQLPDGEGTGMDSGRSSARPTHSRKQKQQTQMVPPSAPNVTRLSDESVMLRWHVVRNDGLPIQFFKVQYRMLTESGKRKSWQTTNENIPYGRQRHESGAGVRNFTSSVTGLKPNSSYRFRIMAVYSNNDNKESNTSGKFFLQRGAALAPLAVPELVDIEEYSQTAVVLHWRLSSDADEQLISGYYAYYRPSASAGEYLKATIDGAKSRSFQISALEPGTIYEFKLQSFSAVAASEFSALKQGRTQRPRASSTPQPVLHAVDTTTPSHNETFNMNPMLTGTIGGGALLVLLVISACLCLCRRRSSRGNNPQHKPRLAELREDFVPLNTCSPNKPRTRHIHITLNPLAQQQQQQQQQQLQQQQHDEKEAQDNDMGYFQRQPVVYDAETLGFNGLARMSSSSLRRSQRTLERAAAGGGSGGNNNNLNQPGDGSLANSADSPRLQASNKPGRVILKRARLSSRSENLSSGSLNSVGV</sequence>
<feature type="signal peptide" evidence="2">
    <location>
        <begin position="1"/>
        <end position="23"/>
    </location>
</feature>
<feature type="chain" id="PRO_0000383621" description="Interference hedgehog" evidence="2">
    <location>
        <begin position="24"/>
        <end position="907"/>
    </location>
</feature>
<feature type="topological domain" description="Extracellular" evidence="2">
    <location>
        <begin position="24"/>
        <end position="709"/>
    </location>
</feature>
<feature type="transmembrane region" description="Helical" evidence="2">
    <location>
        <begin position="710"/>
        <end position="730"/>
    </location>
</feature>
<feature type="topological domain" description="Cytoplasmic" evidence="2">
    <location>
        <begin position="731"/>
        <end position="907"/>
    </location>
</feature>
<feature type="domain" description="Ig-like C2-type 1" evidence="2">
    <location>
        <begin position="42"/>
        <end position="149"/>
    </location>
</feature>
<feature type="domain" description="Ig-like C2-type 2" evidence="2">
    <location>
        <begin position="152"/>
        <end position="233"/>
    </location>
</feature>
<feature type="domain" description="Ig-like C2-type 3" evidence="2">
    <location>
        <begin position="252"/>
        <end position="340"/>
    </location>
</feature>
<feature type="domain" description="Ig-like C2-type 4" evidence="2">
    <location>
        <begin position="346"/>
        <end position="433"/>
    </location>
</feature>
<feature type="domain" description="Fibronectin type-III 1" evidence="4">
    <location>
        <begin position="468"/>
        <end position="578"/>
    </location>
</feature>
<feature type="domain" description="Fibronectin type-III 2" evidence="4">
    <location>
        <begin position="586"/>
        <end position="681"/>
    </location>
</feature>
<feature type="region of interest" description="Disordered" evidence="5">
    <location>
        <begin position="427"/>
        <end position="474"/>
    </location>
</feature>
<feature type="region of interest" description="Disordered" evidence="5">
    <location>
        <begin position="676"/>
        <end position="701"/>
    </location>
</feature>
<feature type="region of interest" description="Disordered" evidence="5">
    <location>
        <begin position="780"/>
        <end position="805"/>
    </location>
</feature>
<feature type="region of interest" description="Disordered" evidence="5">
    <location>
        <begin position="829"/>
        <end position="881"/>
    </location>
</feature>
<feature type="compositionally biased region" description="Polar residues" evidence="5">
    <location>
        <begin position="462"/>
        <end position="474"/>
    </location>
</feature>
<feature type="compositionally biased region" description="Polar residues" evidence="5">
    <location>
        <begin position="676"/>
        <end position="688"/>
    </location>
</feature>
<feature type="compositionally biased region" description="Low complexity" evidence="5">
    <location>
        <begin position="781"/>
        <end position="794"/>
    </location>
</feature>
<feature type="compositionally biased region" description="Low complexity" evidence="5">
    <location>
        <begin position="853"/>
        <end position="863"/>
    </location>
</feature>
<feature type="compositionally biased region" description="Polar residues" evidence="5">
    <location>
        <begin position="865"/>
        <end position="878"/>
    </location>
</feature>
<feature type="binding site" evidence="1">
    <location>
        <position position="504"/>
    </location>
    <ligand>
        <name>heparin</name>
        <dbReference type="ChEBI" id="CHEBI:28304"/>
    </ligand>
</feature>
<feature type="binding site" evidence="1">
    <location>
        <position position="511"/>
    </location>
    <ligand>
        <name>heparin</name>
        <dbReference type="ChEBI" id="CHEBI:28304"/>
    </ligand>
</feature>
<feature type="binding site" evidence="1">
    <location>
        <position position="513"/>
    </location>
    <ligand>
        <name>heparin</name>
        <dbReference type="ChEBI" id="CHEBI:28304"/>
    </ligand>
</feature>
<feature type="binding site" evidence="1">
    <location>
        <position position="552"/>
    </location>
    <ligand>
        <name>heparin</name>
        <dbReference type="ChEBI" id="CHEBI:28304"/>
    </ligand>
</feature>
<feature type="glycosylation site" description="N-linked (GlcNAc...) asparagine" evidence="2">
    <location>
        <position position="101"/>
    </location>
</feature>
<feature type="glycosylation site" description="N-linked (GlcNAc...) asparagine" evidence="2">
    <location>
        <position position="203"/>
    </location>
</feature>
<feature type="glycosylation site" description="N-linked (GlcNAc...) asparagine" evidence="2">
    <location>
        <position position="300"/>
    </location>
</feature>
<feature type="glycosylation site" description="N-linked (GlcNAc...) asparagine" evidence="2">
    <location>
        <position position="355"/>
    </location>
</feature>
<feature type="glycosylation site" description="N-linked (GlcNAc...) asparagine" evidence="2">
    <location>
        <position position="473"/>
    </location>
</feature>
<feature type="glycosylation site" description="N-linked (GlcNAc...) asparagine" evidence="2">
    <location>
        <position position="537"/>
    </location>
</feature>
<feature type="glycosylation site" description="N-linked (GlcNAc...) asparagine" evidence="2">
    <location>
        <position position="548"/>
    </location>
</feature>
<feature type="glycosylation site" description="N-linked (GlcNAc...) asparagine" evidence="2">
    <location>
        <position position="568"/>
    </location>
</feature>
<feature type="glycosylation site" description="N-linked (GlcNAc...) asparagine" evidence="2">
    <location>
        <position position="702"/>
    </location>
</feature>
<feature type="disulfide bond" evidence="3">
    <location>
        <begin position="65"/>
        <end position="127"/>
    </location>
</feature>
<feature type="disulfide bond" evidence="3">
    <location>
        <begin position="173"/>
        <end position="221"/>
    </location>
</feature>
<feature type="disulfide bond" evidence="3">
    <location>
        <begin position="276"/>
        <end position="324"/>
    </location>
</feature>
<feature type="disulfide bond" evidence="3">
    <location>
        <begin position="367"/>
        <end position="415"/>
    </location>
</feature>
<organism>
    <name type="scientific">Drosophila virilis</name>
    <name type="common">Fruit fly</name>
    <dbReference type="NCBI Taxonomy" id="7244"/>
    <lineage>
        <taxon>Eukaryota</taxon>
        <taxon>Metazoa</taxon>
        <taxon>Ecdysozoa</taxon>
        <taxon>Arthropoda</taxon>
        <taxon>Hexapoda</taxon>
        <taxon>Insecta</taxon>
        <taxon>Pterygota</taxon>
        <taxon>Neoptera</taxon>
        <taxon>Endopterygota</taxon>
        <taxon>Diptera</taxon>
        <taxon>Brachycera</taxon>
        <taxon>Muscomorpha</taxon>
        <taxon>Ephydroidea</taxon>
        <taxon>Drosophilidae</taxon>
        <taxon>Drosophila</taxon>
    </lineage>
</organism>
<dbReference type="EMBL" id="CH940649">
    <property type="protein sequence ID" value="EDW64639.1"/>
    <property type="molecule type" value="Genomic_DNA"/>
</dbReference>
<dbReference type="RefSeq" id="XP_002052484.1">
    <property type="nucleotide sequence ID" value="XM_002052448.2"/>
</dbReference>
<dbReference type="RefSeq" id="XP_015028451.1">
    <property type="nucleotide sequence ID" value="XM_015172965.1"/>
</dbReference>
<dbReference type="RefSeq" id="XP_015028452.1">
    <property type="nucleotide sequence ID" value="XM_015172966.1"/>
</dbReference>
<dbReference type="SMR" id="B4LRN7"/>
<dbReference type="FunCoup" id="B4LRN7">
    <property type="interactions" value="39"/>
</dbReference>
<dbReference type="STRING" id="7244.B4LRN7"/>
<dbReference type="GlyCosmos" id="B4LRN7">
    <property type="glycosylation" value="9 sites, No reported glycans"/>
</dbReference>
<dbReference type="EnsemblMetazoa" id="FBtr0233488">
    <property type="protein sequence ID" value="FBpp0231980"/>
    <property type="gene ID" value="FBgn0204733"/>
</dbReference>
<dbReference type="EnsemblMetazoa" id="FBtr0435080">
    <property type="protein sequence ID" value="FBpp0392081"/>
    <property type="gene ID" value="FBgn0204733"/>
</dbReference>
<dbReference type="EnsemblMetazoa" id="FBtr0443244">
    <property type="protein sequence ID" value="FBpp0399656"/>
    <property type="gene ID" value="FBgn0204733"/>
</dbReference>
<dbReference type="EnsemblMetazoa" id="XM_002052448.3">
    <property type="protein sequence ID" value="XP_002052484.1"/>
    <property type="gene ID" value="LOC6627462"/>
</dbReference>
<dbReference type="EnsemblMetazoa" id="XM_015172965.2">
    <property type="protein sequence ID" value="XP_015028451.1"/>
    <property type="gene ID" value="LOC6627462"/>
</dbReference>
<dbReference type="EnsemblMetazoa" id="XM_015172966.2">
    <property type="protein sequence ID" value="XP_015028452.1"/>
    <property type="gene ID" value="LOC6627462"/>
</dbReference>
<dbReference type="GeneID" id="6627462"/>
<dbReference type="KEGG" id="dvi:6627462"/>
<dbReference type="CTD" id="33972"/>
<dbReference type="eggNOG" id="ENOG502QSGM">
    <property type="taxonomic scope" value="Eukaryota"/>
</dbReference>
<dbReference type="HOGENOM" id="CLU_004633_1_0_1"/>
<dbReference type="InParanoid" id="B4LRN7"/>
<dbReference type="OMA" id="CGLMEGK"/>
<dbReference type="OrthoDB" id="9998697at2759"/>
<dbReference type="PhylomeDB" id="B4LRN7"/>
<dbReference type="Proteomes" id="UP000008792">
    <property type="component" value="Unassembled WGS sequence"/>
</dbReference>
<dbReference type="GO" id="GO:0030424">
    <property type="term" value="C:axon"/>
    <property type="evidence" value="ECO:0007669"/>
    <property type="project" value="TreeGrafter"/>
</dbReference>
<dbReference type="GO" id="GO:0009986">
    <property type="term" value="C:cell surface"/>
    <property type="evidence" value="ECO:0007669"/>
    <property type="project" value="EnsemblMetazoa"/>
</dbReference>
<dbReference type="GO" id="GO:0035230">
    <property type="term" value="C:cytoneme"/>
    <property type="evidence" value="ECO:0007669"/>
    <property type="project" value="EnsemblMetazoa"/>
</dbReference>
<dbReference type="GO" id="GO:0016020">
    <property type="term" value="C:membrane"/>
    <property type="evidence" value="ECO:0000250"/>
    <property type="project" value="UniProtKB"/>
</dbReference>
<dbReference type="GO" id="GO:0005886">
    <property type="term" value="C:plasma membrane"/>
    <property type="evidence" value="ECO:0007669"/>
    <property type="project" value="EnsemblMetazoa"/>
</dbReference>
<dbReference type="GO" id="GO:0015026">
    <property type="term" value="F:coreceptor activity"/>
    <property type="evidence" value="ECO:0007669"/>
    <property type="project" value="EnsemblMetazoa"/>
</dbReference>
<dbReference type="GO" id="GO:0097108">
    <property type="term" value="F:hedgehog family protein binding"/>
    <property type="evidence" value="ECO:0007669"/>
    <property type="project" value="EnsemblMetazoa"/>
</dbReference>
<dbReference type="GO" id="GO:0008201">
    <property type="term" value="F:heparin binding"/>
    <property type="evidence" value="ECO:0000250"/>
    <property type="project" value="UniProtKB"/>
</dbReference>
<dbReference type="GO" id="GO:0005113">
    <property type="term" value="F:patched binding"/>
    <property type="evidence" value="ECO:0007669"/>
    <property type="project" value="EnsemblMetazoa"/>
</dbReference>
<dbReference type="GO" id="GO:0042803">
    <property type="term" value="F:protein homodimerization activity"/>
    <property type="evidence" value="ECO:0000250"/>
    <property type="project" value="UniProtKB"/>
</dbReference>
<dbReference type="GO" id="GO:0007411">
    <property type="term" value="P:axon guidance"/>
    <property type="evidence" value="ECO:0007669"/>
    <property type="project" value="TreeGrafter"/>
</dbReference>
<dbReference type="GO" id="GO:0048749">
    <property type="term" value="P:compound eye development"/>
    <property type="evidence" value="ECO:0007669"/>
    <property type="project" value="EnsemblMetazoa"/>
</dbReference>
<dbReference type="GO" id="GO:0035017">
    <property type="term" value="P:cuticle pattern formation"/>
    <property type="evidence" value="ECO:0007669"/>
    <property type="project" value="EnsemblMetazoa"/>
</dbReference>
<dbReference type="GO" id="GO:0034109">
    <property type="term" value="P:homotypic cell-cell adhesion"/>
    <property type="evidence" value="ECO:0007669"/>
    <property type="project" value="EnsemblMetazoa"/>
</dbReference>
<dbReference type="GO" id="GO:0071694">
    <property type="term" value="P:maintenance of protein location in extracellular region"/>
    <property type="evidence" value="ECO:0007669"/>
    <property type="project" value="EnsemblMetazoa"/>
</dbReference>
<dbReference type="GO" id="GO:0007379">
    <property type="term" value="P:segment specification"/>
    <property type="evidence" value="ECO:0007669"/>
    <property type="project" value="EnsemblMetazoa"/>
</dbReference>
<dbReference type="GO" id="GO:0007224">
    <property type="term" value="P:smoothened signaling pathway"/>
    <property type="evidence" value="ECO:0000250"/>
    <property type="project" value="UniProtKB"/>
</dbReference>
<dbReference type="GO" id="GO:0048100">
    <property type="term" value="P:wing disc anterior/posterior pattern formation"/>
    <property type="evidence" value="ECO:0007669"/>
    <property type="project" value="EnsemblMetazoa"/>
</dbReference>
<dbReference type="CDD" id="cd00063">
    <property type="entry name" value="FN3"/>
    <property type="match status" value="2"/>
</dbReference>
<dbReference type="CDD" id="cd00096">
    <property type="entry name" value="Ig"/>
    <property type="match status" value="2"/>
</dbReference>
<dbReference type="FunFam" id="2.60.40.10:FF:001723">
    <property type="entry name" value="Interference hedgehog"/>
    <property type="match status" value="1"/>
</dbReference>
<dbReference type="FunFam" id="2.60.40.10:FF:001747">
    <property type="entry name" value="Interference hedgehog"/>
    <property type="match status" value="1"/>
</dbReference>
<dbReference type="FunFam" id="2.60.40.10:FF:001773">
    <property type="entry name" value="Interference hedgehog"/>
    <property type="match status" value="1"/>
</dbReference>
<dbReference type="FunFam" id="2.60.40.10:FF:002071">
    <property type="entry name" value="Interference hedgehog"/>
    <property type="match status" value="1"/>
</dbReference>
<dbReference type="FunFam" id="2.60.40.10:FF:002212">
    <property type="entry name" value="Interference hedgehog"/>
    <property type="match status" value="1"/>
</dbReference>
<dbReference type="Gene3D" id="2.60.40.10">
    <property type="entry name" value="Immunoglobulins"/>
    <property type="match status" value="6"/>
</dbReference>
<dbReference type="InterPro" id="IPR003961">
    <property type="entry name" value="FN3_dom"/>
</dbReference>
<dbReference type="InterPro" id="IPR036116">
    <property type="entry name" value="FN3_sf"/>
</dbReference>
<dbReference type="InterPro" id="IPR007110">
    <property type="entry name" value="Ig-like_dom"/>
</dbReference>
<dbReference type="InterPro" id="IPR036179">
    <property type="entry name" value="Ig-like_dom_sf"/>
</dbReference>
<dbReference type="InterPro" id="IPR013783">
    <property type="entry name" value="Ig-like_fold"/>
</dbReference>
<dbReference type="InterPro" id="IPR003599">
    <property type="entry name" value="Ig_sub"/>
</dbReference>
<dbReference type="InterPro" id="IPR003598">
    <property type="entry name" value="Ig_sub2"/>
</dbReference>
<dbReference type="PANTHER" id="PTHR44170:SF33">
    <property type="entry name" value="BROTHER OF IHOG, ISOFORM G-RELATED"/>
    <property type="match status" value="1"/>
</dbReference>
<dbReference type="PANTHER" id="PTHR44170">
    <property type="entry name" value="PROTEIN SIDEKICK"/>
    <property type="match status" value="1"/>
</dbReference>
<dbReference type="Pfam" id="PF00041">
    <property type="entry name" value="fn3"/>
    <property type="match status" value="2"/>
</dbReference>
<dbReference type="Pfam" id="PF13927">
    <property type="entry name" value="Ig_3"/>
    <property type="match status" value="2"/>
</dbReference>
<dbReference type="SMART" id="SM00060">
    <property type="entry name" value="FN3"/>
    <property type="match status" value="2"/>
</dbReference>
<dbReference type="SMART" id="SM00409">
    <property type="entry name" value="IG"/>
    <property type="match status" value="4"/>
</dbReference>
<dbReference type="SMART" id="SM00408">
    <property type="entry name" value="IGc2"/>
    <property type="match status" value="3"/>
</dbReference>
<dbReference type="SUPFAM" id="SSF49265">
    <property type="entry name" value="Fibronectin type III"/>
    <property type="match status" value="1"/>
</dbReference>
<dbReference type="SUPFAM" id="SSF48726">
    <property type="entry name" value="Immunoglobulin"/>
    <property type="match status" value="4"/>
</dbReference>
<dbReference type="PROSITE" id="PS50853">
    <property type="entry name" value="FN3"/>
    <property type="match status" value="2"/>
</dbReference>
<dbReference type="PROSITE" id="PS50835">
    <property type="entry name" value="IG_LIKE"/>
    <property type="match status" value="4"/>
</dbReference>
<gene>
    <name evidence="1" type="primary">iHog</name>
    <name type="ORF">GJ17563</name>
</gene>
<accession>B4LRN7</accession>
<reference evidence="7" key="1">
    <citation type="journal article" date="2007" name="Nature">
        <title>Evolution of genes and genomes on the Drosophila phylogeny.</title>
        <authorList>
            <consortium name="Drosophila 12 genomes consortium"/>
        </authorList>
    </citation>
    <scope>NUCLEOTIDE SEQUENCE [LARGE SCALE GENOMIC DNA]</scope>
    <source>
        <strain evidence="7">Tucson 15010-1051.87</strain>
    </source>
</reference>